<reference key="1">
    <citation type="journal article" date="2002" name="Genetics">
        <title>A conditionally dispensable chromosome controls host-specific pathogenicity in the fungal plant pathogen Alternaria alternata.</title>
        <authorList>
            <person name="Hatta R."/>
            <person name="Ito K."/>
            <person name="Hosaki Y."/>
            <person name="Tanaka T."/>
            <person name="Tanaka A."/>
            <person name="Yamamoto M."/>
            <person name="Akimitsu K."/>
            <person name="Tsuge T."/>
        </authorList>
    </citation>
    <scope>NUCLEOTIDE SEQUENCE [GENOMIC DNA]</scope>
    <scope>FUNCTION</scope>
    <scope>DISRUPTION PHENOTYPE</scope>
    <scope>PATHWAY</scope>
    <source>
        <strain>NAF8</strain>
    </source>
</reference>
<reference key="2">
    <citation type="journal article" date="2004" name="Mol. Microbiol.">
        <title>Dissection of the host range of the fungal plant pathogen Alternaria alternata by modification of secondary metabolism.</title>
        <authorList>
            <person name="Ito K."/>
            <person name="Tanaka T."/>
            <person name="Hatta R."/>
            <person name="Yamamoto M."/>
            <person name="Akimitsu K."/>
            <person name="Tsuge T."/>
        </authorList>
    </citation>
    <scope>FUNCTION</scope>
    <source>
        <strain>NAF8</strain>
    </source>
</reference>
<reference key="3">
    <citation type="journal article" date="2005" name="J. Gen. Plant Pathol.">
        <title>Structural analysis of cosmid clone pcAFT-2 carrying AFT10-1 encoding an acyl-CoA dehydrogenase involved in AF-toxin production in the strawberry pathotype of Alternaria alternata.</title>
        <authorList>
            <person name="Ruswandi S."/>
            <person name="Kitani K."/>
            <person name="Akimitsu K."/>
            <person name="Tsuge T."/>
            <person name="Shiraishi T."/>
            <person name="Yamamoto M."/>
        </authorList>
    </citation>
    <scope>FUNCTION</scope>
    <source>
        <strain>NAF8</strain>
    </source>
</reference>
<reference key="4">
    <citation type="journal article" date="2008" name="Mol. Plant Microbe Interact.">
        <title>Functional analysis of a multicopy host-selective ACT-toxin biosynthesis gene in the tangerine pathotype of Alternaria alternata using RNA silencing.</title>
        <authorList>
            <person name="Miyamoto Y."/>
            <person name="Masunaka A."/>
            <person name="Tsuge T."/>
            <person name="Yamamoto M."/>
            <person name="Ohtani K."/>
            <person name="Fukumoto T."/>
            <person name="Gomi K."/>
            <person name="Peever T.L."/>
            <person name="Akimitsu K."/>
        </authorList>
    </citation>
    <scope>FUNCTION</scope>
    <source>
        <strain>NAF8</strain>
    </source>
</reference>
<reference key="5">
    <citation type="journal article" date="2013" name="FEMS Microbiol. Rev.">
        <title>Host-selective toxins produced by the plant pathogenic fungus Alternaria alternata.</title>
        <authorList>
            <person name="Tsuge T."/>
            <person name="Harimoto Y."/>
            <person name="Akimitsu K."/>
            <person name="Ohtani K."/>
            <person name="Kodama M."/>
            <person name="Akagi Y."/>
            <person name="Egusa M."/>
            <person name="Yamamoto M."/>
            <person name="Otani H."/>
        </authorList>
    </citation>
    <scope>REVIEW ON HOST-SELECTIVE TOXINS</scope>
</reference>
<proteinExistence type="inferred from homology"/>
<sequence length="578" mass="63213">MVFTAPCWVPPLPSDLPDSTTLEEFIFCQVKDSQTRSELDRSILICGTQGREYTVQESMERTGRLAQGLSAWLNWPQKSPGKDWKVAAIFNVNCVDFFSISHAIHRLGGTISAINASSTADELEAQLRLSNAQAIFTCNTLLKIAMKASQRVGIPLANIFLTDAPGSYRPDDVYPFQEIDNIVRTAKSSLPLLQLGRGQGASTPAYICFSSGTSGAQKPVLLSHQGIIANIVQINTFEKFRQKGPNISLCILPLAHSYGLVCVAYSALYRGDRLAVLPSSGVEDLLSIVEKLKINTLYLVPTLVSRILSGGKAGRHDLRCVKEVYTGGAPLHPMLGEHILRHHPTWKIKQCYGATEAGTAVSVTSDCDLWPGSVGCLLPGVQAKIVKSDGSETTKHDESGELWVSSPSLAIGYLSNPLATKTTFTVDNTGKTWLRTGDEVKICLSPNGNEHLFIVDRIKDIIKVKGFQVAPVELEQLLLSNDFVEEVAVTSRQDEGEEERPQAFVVRSQVGLEEPQGAVAESLHALVKARKARYKWLHPHVIFVDSLPKTTSGKIMRRALRNMSPANSEVNSRLSSKI</sequence>
<gene>
    <name evidence="8" type="primary">AFT1-1</name>
</gene>
<protein>
    <recommendedName>
        <fullName evidence="8">Acyl-CoA ligase AFT1-1</fullName>
        <ecNumber evidence="11">6.2.1.-</ecNumber>
    </recommendedName>
    <alternativeName>
        <fullName evidence="8">AF-toxin biosynthesis protein 1-1</fullName>
    </alternativeName>
</protein>
<comment type="function">
    <text evidence="4 5 6 7 9">Acyl-CoA ligase; part of the gene clusters that mediate the biosynthesis of the host-selective toxins (HSTs) AF-toxins responsible for Alternaria black spot of strawberry disease by the strawberry pathotype (PubMed:12019223). AF-toxin I and III are valine derivatives of 2,3-dyhydroxy-isovaleric acid and 2-hydroxy-isovaleric acid respectively, while AF II is an isoleucine derivative of 2-hydroxy-valeric acid (PubMed:15066029, PubMed:22846083, Ref.3). These derivatives are bound to a 9,10-epoxy-8-hydroxy-9-methyl-decatrienoic acid (EDA) moiety (PubMed:15066029, PubMed:22846083, Ref.3). On cellular level, AF-toxins affect plasma membrane of susceptible cells and cause a sudden increase in loss of K(+) after a few minutes of toxin treatment (PubMed:22846083). The aldo-keto reductase AFTS1 catalyzes the conversion of 2-keto-isovaleric acid (2-KIV) to 2-hydroxy-isovaleric acid (2-HIV) by reduction of its ketone to an alcohol (PubMed:15066029). The acyl-CoA ligase AFT1, the hydrolase AFT2 and the enoyl-CoA hydratases AFT3 and AFT6, but also the polyketide synthase AFT9, the acyl-CoA dehydrogenase AFT10, the cytochrome P450 monooxygenase AFT11 and the oxidoreductase AFT12 are all involved in the biosynthesis of the AK-, AF- and ACT-toxin common EDA structural moiety (PubMed:12019223, PubMed:18986255, Ref.3). The exact role of each enzyme, and of additional enzymes identified within the AF-toxin clusters have still to be determined (PubMed:12019223, PubMed:18986255, Ref.3).</text>
</comment>
<comment type="pathway">
    <text evidence="4">Mycotoxin biosynthesis.</text>
</comment>
<comment type="subcellular location">
    <subcellularLocation>
        <location evidence="1">Peroxisome</location>
    </subcellularLocation>
    <text evidence="1">The peroxisomal location requires the C-terminal tripeptide peroxisomal targeting signal.</text>
</comment>
<comment type="domain">
    <text evidence="3">Both substrate-binding domains (SBD1 and SBD2) are involved in the substrate recognition, and are sufficient to confer the substrate specificity.</text>
</comment>
<comment type="disruption phenotype">
    <text evidence="4">Abolishes the production of AF-toxins and their precuror 9,10-epoxy-8-hydroxy-9-methyl-decatrienoic acid (EDA); and impairs the pathogenicity (PubMed:12019223). Does not affect growth rate, sporulation, and spore germination (PubMed:12019223).</text>
</comment>
<comment type="miscellaneous">
    <text evidence="4">Gene clusters encoding host-selective toxins (HSTs) are localized on conditionally dispensable chromosomes (CDCs), also called supernumerary chromosomes, where they are present in multiple copies (PubMed:12019223). The CDCs are not essential for saprophytic growth but controls host-selective pathogenicity (PubMed:12019223).</text>
</comment>
<comment type="similarity">
    <text evidence="10">Belongs to the ATP-dependent AMP-binding enzyme family.</text>
</comment>
<keyword id="KW-0067">ATP-binding</keyword>
<keyword id="KW-0436">Ligase</keyword>
<keyword id="KW-0547">Nucleotide-binding</keyword>
<keyword id="KW-0576">Peroxisome</keyword>
<keyword id="KW-0843">Virulence</keyword>
<dbReference type="EC" id="6.2.1.-" evidence="11"/>
<dbReference type="EMBL" id="AB070711">
    <property type="protein sequence ID" value="BAB69076.1"/>
    <property type="molecule type" value="Genomic_DNA"/>
</dbReference>
<dbReference type="SMR" id="Q96VB5"/>
<dbReference type="VEuPathDB" id="FungiDB:CC77DRAFT_1098129"/>
<dbReference type="PHI-base" id="PHI:508"/>
<dbReference type="GO" id="GO:0005777">
    <property type="term" value="C:peroxisome"/>
    <property type="evidence" value="ECO:0007669"/>
    <property type="project" value="UniProtKB-SubCell"/>
</dbReference>
<dbReference type="GO" id="GO:0005524">
    <property type="term" value="F:ATP binding"/>
    <property type="evidence" value="ECO:0007669"/>
    <property type="project" value="UniProtKB-KW"/>
</dbReference>
<dbReference type="GO" id="GO:0016405">
    <property type="term" value="F:CoA-ligase activity"/>
    <property type="evidence" value="ECO:0007669"/>
    <property type="project" value="TreeGrafter"/>
</dbReference>
<dbReference type="Gene3D" id="3.30.300.30">
    <property type="match status" value="1"/>
</dbReference>
<dbReference type="Gene3D" id="3.40.50.12780">
    <property type="entry name" value="N-terminal domain of ligase-like"/>
    <property type="match status" value="1"/>
</dbReference>
<dbReference type="InterPro" id="IPR025110">
    <property type="entry name" value="AMP-bd_C"/>
</dbReference>
<dbReference type="InterPro" id="IPR045851">
    <property type="entry name" value="AMP-bd_C_sf"/>
</dbReference>
<dbReference type="InterPro" id="IPR000873">
    <property type="entry name" value="AMP-dep_synth/lig_dom"/>
</dbReference>
<dbReference type="InterPro" id="IPR042099">
    <property type="entry name" value="ANL_N_sf"/>
</dbReference>
<dbReference type="PANTHER" id="PTHR24096:SF422">
    <property type="entry name" value="BCDNA.GH02901"/>
    <property type="match status" value="1"/>
</dbReference>
<dbReference type="PANTHER" id="PTHR24096">
    <property type="entry name" value="LONG-CHAIN-FATTY-ACID--COA LIGASE"/>
    <property type="match status" value="1"/>
</dbReference>
<dbReference type="Pfam" id="PF00501">
    <property type="entry name" value="AMP-binding"/>
    <property type="match status" value="1"/>
</dbReference>
<dbReference type="Pfam" id="PF13193">
    <property type="entry name" value="AMP-binding_C"/>
    <property type="match status" value="1"/>
</dbReference>
<dbReference type="SUPFAM" id="SSF56801">
    <property type="entry name" value="Acetyl-CoA synthetase-like"/>
    <property type="match status" value="1"/>
</dbReference>
<accession>Q96VB5</accession>
<organism>
    <name type="scientific">Alternaria alternata</name>
    <name type="common">Alternaria rot fungus</name>
    <name type="synonym">Torula alternata</name>
    <dbReference type="NCBI Taxonomy" id="5599"/>
    <lineage>
        <taxon>Eukaryota</taxon>
        <taxon>Fungi</taxon>
        <taxon>Dikarya</taxon>
        <taxon>Ascomycota</taxon>
        <taxon>Pezizomycotina</taxon>
        <taxon>Dothideomycetes</taxon>
        <taxon>Pleosporomycetidae</taxon>
        <taxon>Pleosporales</taxon>
        <taxon>Pleosporineae</taxon>
        <taxon>Pleosporaceae</taxon>
        <taxon>Alternaria</taxon>
        <taxon>Alternaria sect. Alternaria</taxon>
        <taxon>Alternaria alternata complex</taxon>
    </lineage>
</organism>
<evidence type="ECO:0000250" key="1">
    <source>
        <dbReference type="UniProtKB" id="O93800"/>
    </source>
</evidence>
<evidence type="ECO:0000250" key="2">
    <source>
        <dbReference type="UniProtKB" id="Q08AH3"/>
    </source>
</evidence>
<evidence type="ECO:0000250" key="3">
    <source>
        <dbReference type="UniProtKB" id="Q42524"/>
    </source>
</evidence>
<evidence type="ECO:0000269" key="4">
    <source>
    </source>
</evidence>
<evidence type="ECO:0000269" key="5">
    <source>
    </source>
</evidence>
<evidence type="ECO:0000269" key="6">
    <source>
    </source>
</evidence>
<evidence type="ECO:0000269" key="7">
    <source ref="3"/>
</evidence>
<evidence type="ECO:0000303" key="8">
    <source>
    </source>
</evidence>
<evidence type="ECO:0000303" key="9">
    <source>
    </source>
</evidence>
<evidence type="ECO:0000305" key="10"/>
<evidence type="ECO:0000305" key="11">
    <source>
    </source>
</evidence>
<name>AFT11_ALTAL</name>
<feature type="chain" id="PRO_0000444859" description="Acyl-CoA ligase AFT1-1">
    <location>
        <begin position="1"/>
        <end position="578"/>
    </location>
</feature>
<feature type="region of interest" description="SBD1" evidence="3">
    <location>
        <begin position="281"/>
        <end position="350"/>
    </location>
</feature>
<feature type="region of interest" description="SBD2" evidence="3">
    <location>
        <begin position="351"/>
        <end position="413"/>
    </location>
</feature>
<feature type="short sequence motif" description="Peroxisomal targeting signal type 1" evidence="1">
    <location>
        <begin position="576"/>
        <end position="578"/>
    </location>
</feature>
<feature type="binding site" evidence="2">
    <location>
        <begin position="210"/>
        <end position="218"/>
    </location>
    <ligand>
        <name>ATP</name>
        <dbReference type="ChEBI" id="CHEBI:30616"/>
    </ligand>
</feature>
<feature type="binding site" evidence="2">
    <location>
        <begin position="350"/>
        <end position="355"/>
    </location>
    <ligand>
        <name>ATP</name>
        <dbReference type="ChEBI" id="CHEBI:30616"/>
    </ligand>
</feature>
<feature type="binding site" evidence="2">
    <location>
        <position position="438"/>
    </location>
    <ligand>
        <name>ATP</name>
        <dbReference type="ChEBI" id="CHEBI:30616"/>
    </ligand>
</feature>
<feature type="binding site" evidence="2">
    <location>
        <position position="457"/>
    </location>
    <ligand>
        <name>ATP</name>
        <dbReference type="ChEBI" id="CHEBI:30616"/>
    </ligand>
</feature>
<feature type="binding site" evidence="2">
    <location>
        <position position="554"/>
    </location>
    <ligand>
        <name>ATP</name>
        <dbReference type="ChEBI" id="CHEBI:30616"/>
    </ligand>
</feature>